<name>RL32_ANAMF</name>
<proteinExistence type="inferred from homology"/>
<protein>
    <recommendedName>
        <fullName evidence="1">Large ribosomal subunit protein bL32</fullName>
    </recommendedName>
    <alternativeName>
        <fullName evidence="2">50S ribosomal protein L32</fullName>
    </alternativeName>
</protein>
<evidence type="ECO:0000255" key="1">
    <source>
        <dbReference type="HAMAP-Rule" id="MF_00340"/>
    </source>
</evidence>
<evidence type="ECO:0000305" key="2"/>
<reference key="1">
    <citation type="journal article" date="2009" name="BMC Genomics">
        <title>Conservation in the face of diversity: multistrain analysis of an intracellular bacterium.</title>
        <authorList>
            <person name="Dark M.J."/>
            <person name="Herndon D.R."/>
            <person name="Kappmeyer L.S."/>
            <person name="Gonzales M.P."/>
            <person name="Nordeen E."/>
            <person name="Palmer G.H."/>
            <person name="Knowles D.P. Jr."/>
            <person name="Brayton K.A."/>
        </authorList>
    </citation>
    <scope>NUCLEOTIDE SEQUENCE [LARGE SCALE GENOMIC DNA]</scope>
    <source>
        <strain>Florida</strain>
    </source>
</reference>
<gene>
    <name evidence="1" type="primary">rpmF</name>
    <name type="ordered locus">AMF_1047</name>
</gene>
<comment type="similarity">
    <text evidence="1">Belongs to the bacterial ribosomal protein bL32 family.</text>
</comment>
<feature type="chain" id="PRO_1000195954" description="Large ribosomal subunit protein bL32">
    <location>
        <begin position="1"/>
        <end position="58"/>
    </location>
</feature>
<keyword id="KW-1185">Reference proteome</keyword>
<keyword id="KW-0687">Ribonucleoprotein</keyword>
<keyword id="KW-0689">Ribosomal protein</keyword>
<accession>B9KJ30</accession>
<sequence>MAVPKRKKSKSRRNMHRSHLALSAANVVIDPTTGEYKLPHHVCLGGYYNGKQVTESKV</sequence>
<dbReference type="EMBL" id="CP001079">
    <property type="protein sequence ID" value="ACM49492.1"/>
    <property type="molecule type" value="Genomic_DNA"/>
</dbReference>
<dbReference type="SMR" id="B9KJ30"/>
<dbReference type="STRING" id="320483.AMF_1047"/>
<dbReference type="KEGG" id="amf:AMF_1047"/>
<dbReference type="eggNOG" id="COG0333">
    <property type="taxonomic scope" value="Bacteria"/>
</dbReference>
<dbReference type="HOGENOM" id="CLU_129084_2_0_5"/>
<dbReference type="Proteomes" id="UP000007307">
    <property type="component" value="Chromosome"/>
</dbReference>
<dbReference type="GO" id="GO:0015934">
    <property type="term" value="C:large ribosomal subunit"/>
    <property type="evidence" value="ECO:0007669"/>
    <property type="project" value="InterPro"/>
</dbReference>
<dbReference type="GO" id="GO:0003735">
    <property type="term" value="F:structural constituent of ribosome"/>
    <property type="evidence" value="ECO:0007669"/>
    <property type="project" value="InterPro"/>
</dbReference>
<dbReference type="GO" id="GO:0006412">
    <property type="term" value="P:translation"/>
    <property type="evidence" value="ECO:0007669"/>
    <property type="project" value="UniProtKB-UniRule"/>
</dbReference>
<dbReference type="Gene3D" id="1.20.5.640">
    <property type="entry name" value="Single helix bin"/>
    <property type="match status" value="1"/>
</dbReference>
<dbReference type="HAMAP" id="MF_00340">
    <property type="entry name" value="Ribosomal_bL32"/>
    <property type="match status" value="1"/>
</dbReference>
<dbReference type="InterPro" id="IPR002677">
    <property type="entry name" value="Ribosomal_bL32"/>
</dbReference>
<dbReference type="InterPro" id="IPR044957">
    <property type="entry name" value="Ribosomal_bL32_bact"/>
</dbReference>
<dbReference type="InterPro" id="IPR011332">
    <property type="entry name" value="Ribosomal_zn-bd"/>
</dbReference>
<dbReference type="NCBIfam" id="TIGR01031">
    <property type="entry name" value="rpmF_bact"/>
    <property type="match status" value="1"/>
</dbReference>
<dbReference type="PANTHER" id="PTHR35534">
    <property type="entry name" value="50S RIBOSOMAL PROTEIN L32"/>
    <property type="match status" value="1"/>
</dbReference>
<dbReference type="PANTHER" id="PTHR35534:SF1">
    <property type="entry name" value="LARGE RIBOSOMAL SUBUNIT PROTEIN BL32"/>
    <property type="match status" value="1"/>
</dbReference>
<dbReference type="Pfam" id="PF01783">
    <property type="entry name" value="Ribosomal_L32p"/>
    <property type="match status" value="1"/>
</dbReference>
<dbReference type="SUPFAM" id="SSF57829">
    <property type="entry name" value="Zn-binding ribosomal proteins"/>
    <property type="match status" value="1"/>
</dbReference>
<organism>
    <name type="scientific">Anaplasma marginale (strain Florida)</name>
    <dbReference type="NCBI Taxonomy" id="320483"/>
    <lineage>
        <taxon>Bacteria</taxon>
        <taxon>Pseudomonadati</taxon>
        <taxon>Pseudomonadota</taxon>
        <taxon>Alphaproteobacteria</taxon>
        <taxon>Rickettsiales</taxon>
        <taxon>Anaplasmataceae</taxon>
        <taxon>Anaplasma</taxon>
    </lineage>
</organism>